<protein>
    <recommendedName>
        <fullName evidence="1">Nucleotide-binding protein FN1089</fullName>
    </recommendedName>
</protein>
<sequence length="290" mass="33588">MKTKHIIIVTGLSGAGKTTALNILEDMSYYTIDNLPLGLEKSLLDTEIEKLAVGIDIRTFKNTKDFFTFINYIKESGVKMDIIFIEAHEAIILGRYTLSRRAHPLKEVTLLRSILKEKKILFPIREIADLVIDTTEIKTVELEKRFKKFILAKDGENTDININIHIQSFGYKYGIPTDSDLMFDVRFIPNPYYIEKLKELNGFDEEVKEYVLSQKESKEFYFKLLPLLEFLIPQYIKEGKKHLTISIGCSGGQHRSVTFVNKLAEDLKNSKVLEYINVYVSHREKELGHW</sequence>
<comment type="function">
    <text evidence="1">Displays ATPase and GTPase activities.</text>
</comment>
<comment type="similarity">
    <text evidence="1">Belongs to the RapZ-like family.</text>
</comment>
<name>Y1089_FUSNN</name>
<organism>
    <name type="scientific">Fusobacterium nucleatum subsp. nucleatum (strain ATCC 25586 / DSM 15643 / BCRC 10681 / CIP 101130 / JCM 8532 / KCTC 2640 / LMG 13131 / VPI 4355)</name>
    <dbReference type="NCBI Taxonomy" id="190304"/>
    <lineage>
        <taxon>Bacteria</taxon>
        <taxon>Fusobacteriati</taxon>
        <taxon>Fusobacteriota</taxon>
        <taxon>Fusobacteriia</taxon>
        <taxon>Fusobacteriales</taxon>
        <taxon>Fusobacteriaceae</taxon>
        <taxon>Fusobacterium</taxon>
    </lineage>
</organism>
<gene>
    <name type="ordered locus">FN1089</name>
</gene>
<keyword id="KW-0067">ATP-binding</keyword>
<keyword id="KW-0342">GTP-binding</keyword>
<keyword id="KW-0547">Nucleotide-binding</keyword>
<keyword id="KW-1185">Reference proteome</keyword>
<evidence type="ECO:0000255" key="1">
    <source>
        <dbReference type="HAMAP-Rule" id="MF_00636"/>
    </source>
</evidence>
<accession>Q8REL1</accession>
<proteinExistence type="inferred from homology"/>
<reference key="1">
    <citation type="journal article" date="2002" name="J. Bacteriol.">
        <title>Genome sequence and analysis of the oral bacterium Fusobacterium nucleatum strain ATCC 25586.</title>
        <authorList>
            <person name="Kapatral V."/>
            <person name="Anderson I."/>
            <person name="Ivanova N."/>
            <person name="Reznik G."/>
            <person name="Los T."/>
            <person name="Lykidis A."/>
            <person name="Bhattacharyya A."/>
            <person name="Bartman A."/>
            <person name="Gardner W."/>
            <person name="Grechkin G."/>
            <person name="Zhu L."/>
            <person name="Vasieva O."/>
            <person name="Chu L."/>
            <person name="Kogan Y."/>
            <person name="Chaga O."/>
            <person name="Goltsman E."/>
            <person name="Bernal A."/>
            <person name="Larsen N."/>
            <person name="D'Souza M."/>
            <person name="Walunas T."/>
            <person name="Pusch G."/>
            <person name="Haselkorn R."/>
            <person name="Fonstein M."/>
            <person name="Kyrpides N.C."/>
            <person name="Overbeek R."/>
        </authorList>
    </citation>
    <scope>NUCLEOTIDE SEQUENCE [LARGE SCALE GENOMIC DNA]</scope>
    <source>
        <strain>ATCC 25586 / DSM 15643 / BCRC 10681 / CIP 101130 / JCM 8532 / KCTC 2640 / LMG 13131 / VPI 4355</strain>
    </source>
</reference>
<feature type="chain" id="PRO_0000107710" description="Nucleotide-binding protein FN1089">
    <location>
        <begin position="1"/>
        <end position="290"/>
    </location>
</feature>
<feature type="binding site" evidence="1">
    <location>
        <begin position="11"/>
        <end position="18"/>
    </location>
    <ligand>
        <name>ATP</name>
        <dbReference type="ChEBI" id="CHEBI:30616"/>
    </ligand>
</feature>
<feature type="binding site" evidence="1">
    <location>
        <begin position="56"/>
        <end position="59"/>
    </location>
    <ligand>
        <name>GTP</name>
        <dbReference type="ChEBI" id="CHEBI:37565"/>
    </ligand>
</feature>
<dbReference type="EMBL" id="AE009951">
    <property type="protein sequence ID" value="AAL95285.1"/>
    <property type="molecule type" value="Genomic_DNA"/>
</dbReference>
<dbReference type="RefSeq" id="NP_603986.1">
    <property type="nucleotide sequence ID" value="NC_003454.1"/>
</dbReference>
<dbReference type="RefSeq" id="WP_011016889.1">
    <property type="nucleotide sequence ID" value="NZ_CP028101.1"/>
</dbReference>
<dbReference type="SMR" id="Q8REL1"/>
<dbReference type="FunCoup" id="Q8REL1">
    <property type="interactions" value="141"/>
</dbReference>
<dbReference type="STRING" id="190304.FN1089"/>
<dbReference type="PaxDb" id="190304-FN1089"/>
<dbReference type="EnsemblBacteria" id="AAL95285">
    <property type="protein sequence ID" value="AAL95285"/>
    <property type="gene ID" value="FN1089"/>
</dbReference>
<dbReference type="GeneID" id="79784070"/>
<dbReference type="KEGG" id="fnu:FN1089"/>
<dbReference type="PATRIC" id="fig|190304.8.peg.1654"/>
<dbReference type="eggNOG" id="COG1660">
    <property type="taxonomic scope" value="Bacteria"/>
</dbReference>
<dbReference type="HOGENOM" id="CLU_059558_0_0_0"/>
<dbReference type="InParanoid" id="Q8REL1"/>
<dbReference type="BioCyc" id="FNUC190304:G1FZS-1670-MONOMER"/>
<dbReference type="Proteomes" id="UP000002521">
    <property type="component" value="Chromosome"/>
</dbReference>
<dbReference type="GO" id="GO:0005524">
    <property type="term" value="F:ATP binding"/>
    <property type="evidence" value="ECO:0007669"/>
    <property type="project" value="UniProtKB-UniRule"/>
</dbReference>
<dbReference type="GO" id="GO:0005525">
    <property type="term" value="F:GTP binding"/>
    <property type="evidence" value="ECO:0007669"/>
    <property type="project" value="UniProtKB-UniRule"/>
</dbReference>
<dbReference type="GO" id="GO:0060090">
    <property type="term" value="F:molecular adaptor activity"/>
    <property type="evidence" value="ECO:0000318"/>
    <property type="project" value="GO_Central"/>
</dbReference>
<dbReference type="HAMAP" id="MF_00636">
    <property type="entry name" value="RapZ_like"/>
    <property type="match status" value="1"/>
</dbReference>
<dbReference type="InterPro" id="IPR027417">
    <property type="entry name" value="P-loop_NTPase"/>
</dbReference>
<dbReference type="InterPro" id="IPR005337">
    <property type="entry name" value="RapZ-like"/>
</dbReference>
<dbReference type="InterPro" id="IPR053930">
    <property type="entry name" value="RapZ-like_N"/>
</dbReference>
<dbReference type="InterPro" id="IPR053931">
    <property type="entry name" value="RapZ_C"/>
</dbReference>
<dbReference type="NCBIfam" id="NF003828">
    <property type="entry name" value="PRK05416.1"/>
    <property type="match status" value="1"/>
</dbReference>
<dbReference type="PANTHER" id="PTHR30448">
    <property type="entry name" value="RNASE ADAPTER PROTEIN RAPZ"/>
    <property type="match status" value="1"/>
</dbReference>
<dbReference type="PANTHER" id="PTHR30448:SF0">
    <property type="entry name" value="RNASE ADAPTER PROTEIN RAPZ"/>
    <property type="match status" value="1"/>
</dbReference>
<dbReference type="Pfam" id="PF22740">
    <property type="entry name" value="PapZ_C"/>
    <property type="match status" value="1"/>
</dbReference>
<dbReference type="Pfam" id="PF03668">
    <property type="entry name" value="RapZ-like_N"/>
    <property type="match status" value="1"/>
</dbReference>
<dbReference type="PIRSF" id="PIRSF005052">
    <property type="entry name" value="P-loopkin"/>
    <property type="match status" value="1"/>
</dbReference>
<dbReference type="SUPFAM" id="SSF52540">
    <property type="entry name" value="P-loop containing nucleoside triphosphate hydrolases"/>
    <property type="match status" value="1"/>
</dbReference>